<name>LUXS_LEUMM</name>
<accession>Q03V83</accession>
<comment type="function">
    <text evidence="1">Involved in the synthesis of autoinducer 2 (AI-2) which is secreted by bacteria and is used to communicate both the cell density and the metabolic potential of the environment. The regulation of gene expression in response to changes in cell density is called quorum sensing. Catalyzes the transformation of S-ribosylhomocysteine (RHC) to homocysteine (HC) and 4,5-dihydroxy-2,3-pentadione (DPD).</text>
</comment>
<comment type="catalytic activity">
    <reaction evidence="1">
        <text>S-(5-deoxy-D-ribos-5-yl)-L-homocysteine = (S)-4,5-dihydroxypentane-2,3-dione + L-homocysteine</text>
        <dbReference type="Rhea" id="RHEA:17753"/>
        <dbReference type="ChEBI" id="CHEBI:29484"/>
        <dbReference type="ChEBI" id="CHEBI:58195"/>
        <dbReference type="ChEBI" id="CHEBI:58199"/>
        <dbReference type="EC" id="4.4.1.21"/>
    </reaction>
</comment>
<comment type="cofactor">
    <cofactor evidence="1">
        <name>Fe cation</name>
        <dbReference type="ChEBI" id="CHEBI:24875"/>
    </cofactor>
    <text evidence="1">Binds 1 Fe cation per subunit.</text>
</comment>
<comment type="subunit">
    <text evidence="1">Homodimer.</text>
</comment>
<comment type="similarity">
    <text evidence="1">Belongs to the LuxS family.</text>
</comment>
<dbReference type="EC" id="4.4.1.21" evidence="1"/>
<dbReference type="EMBL" id="CP000414">
    <property type="protein sequence ID" value="ABJ62889.1"/>
    <property type="molecule type" value="Genomic_DNA"/>
</dbReference>
<dbReference type="RefSeq" id="WP_002815828.1">
    <property type="nucleotide sequence ID" value="NC_008531.1"/>
</dbReference>
<dbReference type="SMR" id="Q03V83"/>
<dbReference type="EnsemblBacteria" id="ABJ62889">
    <property type="protein sequence ID" value="ABJ62889"/>
    <property type="gene ID" value="LEUM_1802"/>
</dbReference>
<dbReference type="KEGG" id="lme:LEUM_1802"/>
<dbReference type="eggNOG" id="COG1854">
    <property type="taxonomic scope" value="Bacteria"/>
</dbReference>
<dbReference type="HOGENOM" id="CLU_107531_2_1_9"/>
<dbReference type="Proteomes" id="UP000000362">
    <property type="component" value="Chromosome"/>
</dbReference>
<dbReference type="GO" id="GO:0005506">
    <property type="term" value="F:iron ion binding"/>
    <property type="evidence" value="ECO:0007669"/>
    <property type="project" value="InterPro"/>
</dbReference>
<dbReference type="GO" id="GO:0043768">
    <property type="term" value="F:S-ribosylhomocysteine lyase activity"/>
    <property type="evidence" value="ECO:0007669"/>
    <property type="project" value="UniProtKB-UniRule"/>
</dbReference>
<dbReference type="GO" id="GO:0009372">
    <property type="term" value="P:quorum sensing"/>
    <property type="evidence" value="ECO:0007669"/>
    <property type="project" value="UniProtKB-UniRule"/>
</dbReference>
<dbReference type="Gene3D" id="3.30.1360.80">
    <property type="entry name" value="S-ribosylhomocysteinase (LuxS)"/>
    <property type="match status" value="1"/>
</dbReference>
<dbReference type="HAMAP" id="MF_00091">
    <property type="entry name" value="LuxS"/>
    <property type="match status" value="1"/>
</dbReference>
<dbReference type="InterPro" id="IPR037005">
    <property type="entry name" value="LuxS_sf"/>
</dbReference>
<dbReference type="InterPro" id="IPR011249">
    <property type="entry name" value="Metalloenz_LuxS/M16"/>
</dbReference>
<dbReference type="InterPro" id="IPR003815">
    <property type="entry name" value="S-ribosylhomocysteinase"/>
</dbReference>
<dbReference type="NCBIfam" id="NF002611">
    <property type="entry name" value="PRK02260.3-4"/>
    <property type="match status" value="1"/>
</dbReference>
<dbReference type="PANTHER" id="PTHR35799">
    <property type="entry name" value="S-RIBOSYLHOMOCYSTEINE LYASE"/>
    <property type="match status" value="1"/>
</dbReference>
<dbReference type="PANTHER" id="PTHR35799:SF1">
    <property type="entry name" value="S-RIBOSYLHOMOCYSTEINE LYASE"/>
    <property type="match status" value="1"/>
</dbReference>
<dbReference type="Pfam" id="PF02664">
    <property type="entry name" value="LuxS"/>
    <property type="match status" value="1"/>
</dbReference>
<dbReference type="PIRSF" id="PIRSF006160">
    <property type="entry name" value="AI2"/>
    <property type="match status" value="1"/>
</dbReference>
<dbReference type="PRINTS" id="PR01487">
    <property type="entry name" value="LUXSPROTEIN"/>
</dbReference>
<dbReference type="SUPFAM" id="SSF63411">
    <property type="entry name" value="LuxS/MPP-like metallohydrolase"/>
    <property type="match status" value="1"/>
</dbReference>
<sequence>MSETVVESFTLDHTKVKAPYVRVIETQAGPNGGSITNYDLRLTQPNETSIETGGLHTLEHLFAGLVRDEIDGIIDMSPFGCRTGFHVISWVNYDSETLAKVFKKVLEKIVSDEVTEVPAAEIESCGNYKDHSLHSAKEWAKIILAQGISSDAFERKIV</sequence>
<keyword id="KW-0071">Autoinducer synthesis</keyword>
<keyword id="KW-0408">Iron</keyword>
<keyword id="KW-0456">Lyase</keyword>
<keyword id="KW-0479">Metal-binding</keyword>
<keyword id="KW-0673">Quorum sensing</keyword>
<keyword id="KW-1185">Reference proteome</keyword>
<gene>
    <name evidence="1" type="primary">luxS</name>
    <name type="ordered locus">LEUM_1802</name>
</gene>
<proteinExistence type="inferred from homology"/>
<organism>
    <name type="scientific">Leuconostoc mesenteroides subsp. mesenteroides (strain ATCC 8293 / DSM 20343 / BCRC 11652 / CCM 1803 / JCM 6124 / NCDO 523 / NBRC 100496 / NCIMB 8023 / NCTC 12954 / NRRL B-1118 / 37Y)</name>
    <dbReference type="NCBI Taxonomy" id="203120"/>
    <lineage>
        <taxon>Bacteria</taxon>
        <taxon>Bacillati</taxon>
        <taxon>Bacillota</taxon>
        <taxon>Bacilli</taxon>
        <taxon>Lactobacillales</taxon>
        <taxon>Lactobacillaceae</taxon>
        <taxon>Leuconostoc</taxon>
    </lineage>
</organism>
<protein>
    <recommendedName>
        <fullName evidence="1">S-ribosylhomocysteine lyase</fullName>
        <ecNumber evidence="1">4.4.1.21</ecNumber>
    </recommendedName>
    <alternativeName>
        <fullName evidence="1">AI-2 synthesis protein</fullName>
    </alternativeName>
    <alternativeName>
        <fullName evidence="1">Autoinducer-2 production protein LuxS</fullName>
    </alternativeName>
</protein>
<feature type="chain" id="PRO_0000298013" description="S-ribosylhomocysteine lyase">
    <location>
        <begin position="1"/>
        <end position="158"/>
    </location>
</feature>
<feature type="binding site" evidence="1">
    <location>
        <position position="56"/>
    </location>
    <ligand>
        <name>Fe cation</name>
        <dbReference type="ChEBI" id="CHEBI:24875"/>
    </ligand>
</feature>
<feature type="binding site" evidence="1">
    <location>
        <position position="60"/>
    </location>
    <ligand>
        <name>Fe cation</name>
        <dbReference type="ChEBI" id="CHEBI:24875"/>
    </ligand>
</feature>
<feature type="binding site" evidence="1">
    <location>
        <position position="125"/>
    </location>
    <ligand>
        <name>Fe cation</name>
        <dbReference type="ChEBI" id="CHEBI:24875"/>
    </ligand>
</feature>
<reference key="1">
    <citation type="journal article" date="2006" name="Proc. Natl. Acad. Sci. U.S.A.">
        <title>Comparative genomics of the lactic acid bacteria.</title>
        <authorList>
            <person name="Makarova K.S."/>
            <person name="Slesarev A."/>
            <person name="Wolf Y.I."/>
            <person name="Sorokin A."/>
            <person name="Mirkin B."/>
            <person name="Koonin E.V."/>
            <person name="Pavlov A."/>
            <person name="Pavlova N."/>
            <person name="Karamychev V."/>
            <person name="Polouchine N."/>
            <person name="Shakhova V."/>
            <person name="Grigoriev I."/>
            <person name="Lou Y."/>
            <person name="Rohksar D."/>
            <person name="Lucas S."/>
            <person name="Huang K."/>
            <person name="Goodstein D.M."/>
            <person name="Hawkins T."/>
            <person name="Plengvidhya V."/>
            <person name="Welker D."/>
            <person name="Hughes J."/>
            <person name="Goh Y."/>
            <person name="Benson A."/>
            <person name="Baldwin K."/>
            <person name="Lee J.-H."/>
            <person name="Diaz-Muniz I."/>
            <person name="Dosti B."/>
            <person name="Smeianov V."/>
            <person name="Wechter W."/>
            <person name="Barabote R."/>
            <person name="Lorca G."/>
            <person name="Altermann E."/>
            <person name="Barrangou R."/>
            <person name="Ganesan B."/>
            <person name="Xie Y."/>
            <person name="Rawsthorne H."/>
            <person name="Tamir D."/>
            <person name="Parker C."/>
            <person name="Breidt F."/>
            <person name="Broadbent J.R."/>
            <person name="Hutkins R."/>
            <person name="O'Sullivan D."/>
            <person name="Steele J."/>
            <person name="Unlu G."/>
            <person name="Saier M.H. Jr."/>
            <person name="Klaenhammer T."/>
            <person name="Richardson P."/>
            <person name="Kozyavkin S."/>
            <person name="Weimer B.C."/>
            <person name="Mills D.A."/>
        </authorList>
    </citation>
    <scope>NUCLEOTIDE SEQUENCE [LARGE SCALE GENOMIC DNA]</scope>
    <source>
        <strain>ATCC 8293 / DSM 20343 / BCRC 11652 / CCM 1803 / JCM 6124 / NCDO 523 / NBRC 100496 / NCIMB 8023 / NCTC 12954 / NRRL B-1118 / 37Y</strain>
    </source>
</reference>
<evidence type="ECO:0000255" key="1">
    <source>
        <dbReference type="HAMAP-Rule" id="MF_00091"/>
    </source>
</evidence>